<sequence length="138" mass="15342">MSRVVSALMGLVLMFGCAFFSVQPQAQALDLSNGFVSAAVLGERVNPADKVLESEYGKKIDLNNASVRLFRELRGFYPTLAKRIIENAPYDSVEDVLNIPDLSEKQLARLEENLERFTVTPPADVFIDGDQRLNTGDY</sequence>
<protein>
    <recommendedName>
        <fullName evidence="2">Photosystem II extrinsic protein U</fullName>
        <shortName evidence="2">PSII-U</shortName>
        <shortName evidence="2">PsbU</shortName>
    </recommendedName>
    <alternativeName>
        <fullName evidence="2">Photosystem II 12 kDa extrinsic protein</fullName>
        <shortName evidence="2">PS II complex 12 kDa extrinsic protein</shortName>
    </alternativeName>
</protein>
<evidence type="ECO:0000250" key="1"/>
<evidence type="ECO:0000255" key="2">
    <source>
        <dbReference type="HAMAP-Rule" id="MF_00589"/>
    </source>
</evidence>
<evidence type="ECO:0000269" key="3">
    <source>
    </source>
</evidence>
<keyword id="KW-0903">Direct protein sequencing</keyword>
<keyword id="KW-0249">Electron transport</keyword>
<keyword id="KW-0472">Membrane</keyword>
<keyword id="KW-0602">Photosynthesis</keyword>
<keyword id="KW-0604">Photosystem II</keyword>
<keyword id="KW-1185">Reference proteome</keyword>
<keyword id="KW-0732">Signal</keyword>
<keyword id="KW-0793">Thylakoid</keyword>
<keyword id="KW-0813">Transport</keyword>
<feature type="signal peptide" evidence="2">
    <location>
        <begin position="1"/>
        <end position="28"/>
    </location>
</feature>
<feature type="propeptide" id="PRO_0000029603" evidence="1">
    <location>
        <begin position="29"/>
        <end position="42"/>
    </location>
</feature>
<feature type="chain" id="PRO_0000029604" description="Photosystem II extrinsic protein U">
    <location>
        <begin position="43"/>
        <end position="138"/>
    </location>
</feature>
<organism>
    <name type="scientific">Picosynechococcus sp. (strain ATCC 27264 / PCC 7002 / PR-6)</name>
    <name type="common">Agmenellum quadruplicatum</name>
    <dbReference type="NCBI Taxonomy" id="32049"/>
    <lineage>
        <taxon>Bacteria</taxon>
        <taxon>Bacillati</taxon>
        <taxon>Cyanobacteriota</taxon>
        <taxon>Cyanophyceae</taxon>
        <taxon>Oscillatoriophycideae</taxon>
        <taxon>Chroococcales</taxon>
        <taxon>Geminocystaceae</taxon>
        <taxon>Picosynechococcus</taxon>
    </lineage>
</organism>
<gene>
    <name evidence="2" type="primary">psbU</name>
    <name type="ordered locus">SYNPCC7002_A0322</name>
</gene>
<proteinExistence type="evidence at protein level"/>
<reference key="1">
    <citation type="journal article" date="1997" name="Plant Physiol.">
        <title>Thermal protection of the oxygen-evolving machinery by PsbU, an extrinsic protein of photosystem II, in Synechococcus species PCC 7002.</title>
        <authorList>
            <person name="Nishiyama Y."/>
            <person name="Los D.A."/>
            <person name="Hayashi H."/>
            <person name="Murata N."/>
        </authorList>
    </citation>
    <scope>NUCLEOTIDE SEQUENCE [GENOMIC DNA]</scope>
    <scope>PROTEIN SEQUENCE OF 43-101</scope>
</reference>
<reference key="2">
    <citation type="submission" date="2008-02" db="EMBL/GenBank/DDBJ databases">
        <title>Complete sequence of Synechococcus sp. PCC 7002.</title>
        <authorList>
            <person name="Li T."/>
            <person name="Zhao J."/>
            <person name="Zhao C."/>
            <person name="Liu Z."/>
            <person name="Zhao F."/>
            <person name="Marquardt J."/>
            <person name="Nomura C.T."/>
            <person name="Persson S."/>
            <person name="Detter J.C."/>
            <person name="Richardson P.M."/>
            <person name="Lanz C."/>
            <person name="Schuster S.C."/>
            <person name="Wang J."/>
            <person name="Li S."/>
            <person name="Huang X."/>
            <person name="Cai T."/>
            <person name="Yu Z."/>
            <person name="Luo J."/>
            <person name="Zhao J."/>
            <person name="Bryant D.A."/>
        </authorList>
    </citation>
    <scope>NUCLEOTIDE SEQUENCE [LARGE SCALE GENOMIC DNA]</scope>
    <source>
        <strain>ATCC 27264 / PCC 7002 / PR-6</strain>
    </source>
</reference>
<reference key="3">
    <citation type="journal article" date="1999" name="Plant Physiol.">
        <title>PsbU, a protein associated with photosystem II, is required for the acquisition of cellular thermotolerance in Synechococcus species PCC 7002.</title>
        <authorList>
            <person name="Nishiyama Y."/>
            <person name="Los D.A."/>
            <person name="Murata N."/>
        </authorList>
    </citation>
    <scope>FUNCTION</scope>
</reference>
<dbReference type="EMBL" id="X93509">
    <property type="protein sequence ID" value="CAA63766.1"/>
    <property type="molecule type" value="Genomic_DNA"/>
</dbReference>
<dbReference type="EMBL" id="CP000951">
    <property type="protein sequence ID" value="ACA98332.1"/>
    <property type="molecule type" value="Genomic_DNA"/>
</dbReference>
<dbReference type="RefSeq" id="WP_012305956.1">
    <property type="nucleotide sequence ID" value="NZ_JAHHPU010000004.1"/>
</dbReference>
<dbReference type="SMR" id="P74765"/>
<dbReference type="STRING" id="32049.SYNPCC7002_A0322"/>
<dbReference type="KEGG" id="syp:SYNPCC7002_A0322"/>
<dbReference type="eggNOG" id="COG1555">
    <property type="taxonomic scope" value="Bacteria"/>
</dbReference>
<dbReference type="HOGENOM" id="CLU_141240_1_0_3"/>
<dbReference type="Proteomes" id="UP000001688">
    <property type="component" value="Chromosome"/>
</dbReference>
<dbReference type="GO" id="GO:0019898">
    <property type="term" value="C:extrinsic component of membrane"/>
    <property type="evidence" value="ECO:0007669"/>
    <property type="project" value="InterPro"/>
</dbReference>
<dbReference type="GO" id="GO:0009654">
    <property type="term" value="C:photosystem II oxygen evolving complex"/>
    <property type="evidence" value="ECO:0007669"/>
    <property type="project" value="InterPro"/>
</dbReference>
<dbReference type="GO" id="GO:0031676">
    <property type="term" value="C:plasma membrane-derived thylakoid membrane"/>
    <property type="evidence" value="ECO:0007669"/>
    <property type="project" value="UniProtKB-SubCell"/>
</dbReference>
<dbReference type="GO" id="GO:0015979">
    <property type="term" value="P:photosynthesis"/>
    <property type="evidence" value="ECO:0007669"/>
    <property type="project" value="UniProtKB-UniRule"/>
</dbReference>
<dbReference type="GO" id="GO:0042549">
    <property type="term" value="P:photosystem II stabilization"/>
    <property type="evidence" value="ECO:0007669"/>
    <property type="project" value="InterPro"/>
</dbReference>
<dbReference type="Gene3D" id="1.10.150.320">
    <property type="entry name" value="Photosystem II 12 kDa extrinsic protein"/>
    <property type="match status" value="1"/>
</dbReference>
<dbReference type="HAMAP" id="MF_00589">
    <property type="entry name" value="PSII_PsbU"/>
    <property type="match status" value="1"/>
</dbReference>
<dbReference type="InterPro" id="IPR010527">
    <property type="entry name" value="PSII_PsbU"/>
</dbReference>
<dbReference type="NCBIfam" id="NF002708">
    <property type="entry name" value="PRK02515.1"/>
    <property type="match status" value="1"/>
</dbReference>
<dbReference type="Pfam" id="PF06514">
    <property type="entry name" value="PsbU"/>
    <property type="match status" value="1"/>
</dbReference>
<dbReference type="SUPFAM" id="SSF81585">
    <property type="entry name" value="PsbU/PolX domain-like"/>
    <property type="match status" value="1"/>
</dbReference>
<comment type="function">
    <text evidence="2 3">One of the extrinsic, lumenal subunits of photosystem II (PSII). PSII is a light-driven water plastoquinone oxidoreductase, using light energy to abstract electrons from H(2)O, generating a proton gradient subsequently used for ATP formation. The extrinsic proteins stabilize the structure of photosystem II oxygen-evolving complex (OEC), the ion environment of oxygen evolution and protect the OEC against heat-induced inactivation.</text>
</comment>
<comment type="subunit">
    <text evidence="2">PSII is composed of 1 copy each of membrane proteins PsbA, PsbB, PsbC, PsbD, PsbE, PsbF, PsbH, PsbI, PsbJ, PsbK, PsbL, PsbM, PsbT, PsbX, PsbY, PsbZ, Psb30/Ycf12, peripheral proteins PsbO, CyanoQ (PsbQ), PsbU, PsbV and a large number of cofactors. It forms dimeric complexes.</text>
</comment>
<comment type="subcellular location">
    <subcellularLocation>
        <location evidence="2">Cellular thylakoid membrane</location>
        <topology evidence="2">Peripheral membrane protein</topology>
        <orientation evidence="2">Lumenal side</orientation>
    </subcellularLocation>
</comment>
<comment type="similarity">
    <text evidence="2">Belongs to the PsbU family.</text>
</comment>
<name>PSBU_PICP2</name>
<accession>P74765</accession>
<accession>B1XNF4</accession>